<organism>
    <name type="scientific">Maricaulis maris (strain MCS10)</name>
    <name type="common">Caulobacter maris</name>
    <dbReference type="NCBI Taxonomy" id="394221"/>
    <lineage>
        <taxon>Bacteria</taxon>
        <taxon>Pseudomonadati</taxon>
        <taxon>Pseudomonadota</taxon>
        <taxon>Alphaproteobacteria</taxon>
        <taxon>Maricaulales</taxon>
        <taxon>Maricaulaceae</taxon>
        <taxon>Maricaulis</taxon>
    </lineage>
</organism>
<comment type="function">
    <text evidence="1">Binds the 23S rRNA.</text>
</comment>
<comment type="subunit">
    <text evidence="1">Part of the 50S ribosomal subunit.</text>
</comment>
<comment type="similarity">
    <text evidence="1">Belongs to the bacterial ribosomal protein bL31 family. Type A subfamily.</text>
</comment>
<sequence>MKKDLHPDYHVINVVMTNGTTFQTKSTWGKEGDTINLDIDPTSHPAWTGGNQHLLDRGGRVSRFKDKFKGFA</sequence>
<feature type="chain" id="PRO_1000126656" description="Large ribosomal subunit protein bL31">
    <location>
        <begin position="1"/>
        <end position="72"/>
    </location>
</feature>
<keyword id="KW-1185">Reference proteome</keyword>
<keyword id="KW-0687">Ribonucleoprotein</keyword>
<keyword id="KW-0689">Ribosomal protein</keyword>
<keyword id="KW-0694">RNA-binding</keyword>
<keyword id="KW-0699">rRNA-binding</keyword>
<evidence type="ECO:0000255" key="1">
    <source>
        <dbReference type="HAMAP-Rule" id="MF_00501"/>
    </source>
</evidence>
<evidence type="ECO:0000305" key="2"/>
<accession>Q0ALH6</accession>
<proteinExistence type="inferred from homology"/>
<dbReference type="EMBL" id="CP000449">
    <property type="protein sequence ID" value="ABI66867.1"/>
    <property type="molecule type" value="Genomic_DNA"/>
</dbReference>
<dbReference type="RefSeq" id="WP_011644511.1">
    <property type="nucleotide sequence ID" value="NC_008347.1"/>
</dbReference>
<dbReference type="SMR" id="Q0ALH6"/>
<dbReference type="STRING" id="394221.Mmar10_2581"/>
<dbReference type="KEGG" id="mmr:Mmar10_2581"/>
<dbReference type="eggNOG" id="COG0254">
    <property type="taxonomic scope" value="Bacteria"/>
</dbReference>
<dbReference type="HOGENOM" id="CLU_114306_3_2_5"/>
<dbReference type="OrthoDB" id="9803251at2"/>
<dbReference type="Proteomes" id="UP000001964">
    <property type="component" value="Chromosome"/>
</dbReference>
<dbReference type="GO" id="GO:1990904">
    <property type="term" value="C:ribonucleoprotein complex"/>
    <property type="evidence" value="ECO:0007669"/>
    <property type="project" value="UniProtKB-KW"/>
</dbReference>
<dbReference type="GO" id="GO:0005840">
    <property type="term" value="C:ribosome"/>
    <property type="evidence" value="ECO:0007669"/>
    <property type="project" value="UniProtKB-KW"/>
</dbReference>
<dbReference type="GO" id="GO:0019843">
    <property type="term" value="F:rRNA binding"/>
    <property type="evidence" value="ECO:0007669"/>
    <property type="project" value="UniProtKB-KW"/>
</dbReference>
<dbReference type="GO" id="GO:0003735">
    <property type="term" value="F:structural constituent of ribosome"/>
    <property type="evidence" value="ECO:0007669"/>
    <property type="project" value="InterPro"/>
</dbReference>
<dbReference type="GO" id="GO:0006412">
    <property type="term" value="P:translation"/>
    <property type="evidence" value="ECO:0007669"/>
    <property type="project" value="UniProtKB-UniRule"/>
</dbReference>
<dbReference type="Gene3D" id="4.10.830.30">
    <property type="entry name" value="Ribosomal protein L31"/>
    <property type="match status" value="1"/>
</dbReference>
<dbReference type="HAMAP" id="MF_00501">
    <property type="entry name" value="Ribosomal_bL31_1"/>
    <property type="match status" value="1"/>
</dbReference>
<dbReference type="InterPro" id="IPR034704">
    <property type="entry name" value="Ribosomal_bL28/bL31-like_sf"/>
</dbReference>
<dbReference type="InterPro" id="IPR002150">
    <property type="entry name" value="Ribosomal_bL31"/>
</dbReference>
<dbReference type="InterPro" id="IPR027491">
    <property type="entry name" value="Ribosomal_bL31_A"/>
</dbReference>
<dbReference type="InterPro" id="IPR042105">
    <property type="entry name" value="Ribosomal_bL31_sf"/>
</dbReference>
<dbReference type="NCBIfam" id="TIGR00105">
    <property type="entry name" value="L31"/>
    <property type="match status" value="1"/>
</dbReference>
<dbReference type="NCBIfam" id="NF001809">
    <property type="entry name" value="PRK00528.1"/>
    <property type="match status" value="1"/>
</dbReference>
<dbReference type="PANTHER" id="PTHR33280">
    <property type="entry name" value="50S RIBOSOMAL PROTEIN L31, CHLOROPLASTIC"/>
    <property type="match status" value="1"/>
</dbReference>
<dbReference type="PANTHER" id="PTHR33280:SF6">
    <property type="entry name" value="LARGE RIBOSOMAL SUBUNIT PROTEIN BL31A"/>
    <property type="match status" value="1"/>
</dbReference>
<dbReference type="Pfam" id="PF01197">
    <property type="entry name" value="Ribosomal_L31"/>
    <property type="match status" value="1"/>
</dbReference>
<dbReference type="PRINTS" id="PR01249">
    <property type="entry name" value="RIBOSOMALL31"/>
</dbReference>
<dbReference type="SUPFAM" id="SSF143800">
    <property type="entry name" value="L28p-like"/>
    <property type="match status" value="1"/>
</dbReference>
<dbReference type="PROSITE" id="PS01143">
    <property type="entry name" value="RIBOSOMAL_L31"/>
    <property type="match status" value="1"/>
</dbReference>
<protein>
    <recommendedName>
        <fullName evidence="1">Large ribosomal subunit protein bL31</fullName>
    </recommendedName>
    <alternativeName>
        <fullName evidence="2">50S ribosomal protein L31</fullName>
    </alternativeName>
</protein>
<gene>
    <name evidence="1" type="primary">rpmE</name>
    <name type="ordered locus">Mmar10_2581</name>
</gene>
<reference key="1">
    <citation type="submission" date="2006-08" db="EMBL/GenBank/DDBJ databases">
        <title>Complete sequence of Maricaulis maris MCS10.</title>
        <authorList>
            <consortium name="US DOE Joint Genome Institute"/>
            <person name="Copeland A."/>
            <person name="Lucas S."/>
            <person name="Lapidus A."/>
            <person name="Barry K."/>
            <person name="Detter J.C."/>
            <person name="Glavina del Rio T."/>
            <person name="Hammon N."/>
            <person name="Israni S."/>
            <person name="Dalin E."/>
            <person name="Tice H."/>
            <person name="Pitluck S."/>
            <person name="Saunders E."/>
            <person name="Brettin T."/>
            <person name="Bruce D."/>
            <person name="Han C."/>
            <person name="Tapia R."/>
            <person name="Gilna P."/>
            <person name="Schmutz J."/>
            <person name="Larimer F."/>
            <person name="Land M."/>
            <person name="Hauser L."/>
            <person name="Kyrpides N."/>
            <person name="Mikhailova N."/>
            <person name="Viollier P."/>
            <person name="Stephens C."/>
            <person name="Richardson P."/>
        </authorList>
    </citation>
    <scope>NUCLEOTIDE SEQUENCE [LARGE SCALE GENOMIC DNA]</scope>
    <source>
        <strain>MCS10</strain>
    </source>
</reference>
<name>RL31_MARMM</name>